<protein>
    <recommendedName>
        <fullName evidence="4 5">Vaa serine proteinase homolog 1</fullName>
        <shortName evidence="4 5">VaaSPH-1</shortName>
    </recommendedName>
    <alternativeName>
        <fullName evidence="9">Enzymatically inactive serine proteinase-like protein SPH-1</fullName>
    </alternativeName>
    <alternativeName>
        <fullName>Snake venom serine protease homolog</fullName>
    </alternativeName>
</protein>
<feature type="signal peptide" evidence="1">
    <location>
        <begin position="1"/>
        <end position="18"/>
    </location>
</feature>
<feature type="propeptide" id="PRO_0000445811" evidence="6">
    <location>
        <begin position="19"/>
        <end position="24"/>
    </location>
</feature>
<feature type="chain" id="PRO_5012045934" description="Vaa serine proteinase homolog 1" evidence="3">
    <location>
        <begin position="25"/>
        <end position="260"/>
    </location>
</feature>
<feature type="domain" description="Peptidase S1" evidence="2">
    <location>
        <begin position="25"/>
        <end position="251"/>
    </location>
</feature>
<feature type="region of interest" description="Key residues for binding to FVIIIa" evidence="8">
    <location>
        <begin position="172"/>
        <end position="186"/>
    </location>
</feature>
<feature type="glycosylation site" description="N-linked (GlcNAc...) asparagine" evidence="1">
    <location>
        <position position="123"/>
    </location>
</feature>
<feature type="glycosylation site" description="N-linked (GlcNAc...) asparagine" evidence="1">
    <location>
        <position position="253"/>
    </location>
</feature>
<feature type="disulfide bond" evidence="2">
    <location>
        <begin position="31"/>
        <end position="165"/>
    </location>
</feature>
<feature type="disulfide bond" evidence="2">
    <location>
        <begin position="52"/>
        <end position="68"/>
    </location>
</feature>
<feature type="disulfide bond" evidence="2">
    <location>
        <begin position="100"/>
        <end position="258"/>
    </location>
</feature>
<feature type="disulfide bond" evidence="2">
    <location>
        <begin position="144"/>
        <end position="212"/>
    </location>
</feature>
<feature type="disulfide bond" evidence="2">
    <location>
        <begin position="176"/>
        <end position="191"/>
    </location>
</feature>
<feature type="disulfide bond" evidence="2">
    <location>
        <begin position="202"/>
        <end position="227"/>
    </location>
</feature>
<sequence>MVLIRVLANLLVLQLSYAQKSSELVIGGDECNINEHPFLVALHTARSKRFYCAGTLINQEWVLTAARCDRKNIRIILGVHSKNVPNEDEQMRVPKEKFFCLSSKTYTRWDKDIMLIRLKRPVNDSTHIAPLSLPSSPPSVGSVCRIMGWGTITTTKVTYPDVPHCADINMFDYSVCQKVYRKLPEKSRTLCAGILQGGIDSCKVDNGGPLICNGQIQGIVSWGGYPCAQPHKPALYTNVFDYTDWIQSIIAGNITATCPP</sequence>
<dbReference type="EMBL" id="KT148824">
    <property type="protein sequence ID" value="AMB36342.1"/>
    <property type="molecule type" value="mRNA"/>
</dbReference>
<dbReference type="SMR" id="A0A1I9KNP0"/>
<dbReference type="BRENDA" id="3.4.21.74">
    <property type="organism ID" value="10997"/>
</dbReference>
<dbReference type="GO" id="GO:0005576">
    <property type="term" value="C:extracellular region"/>
    <property type="evidence" value="ECO:0007669"/>
    <property type="project" value="UniProtKB-SubCell"/>
</dbReference>
<dbReference type="GO" id="GO:0030141">
    <property type="term" value="C:secretory granule"/>
    <property type="evidence" value="ECO:0007669"/>
    <property type="project" value="TreeGrafter"/>
</dbReference>
<dbReference type="GO" id="GO:0004252">
    <property type="term" value="F:serine-type endopeptidase activity"/>
    <property type="evidence" value="ECO:0007669"/>
    <property type="project" value="InterPro"/>
</dbReference>
<dbReference type="GO" id="GO:0090729">
    <property type="term" value="F:toxin activity"/>
    <property type="evidence" value="ECO:0007669"/>
    <property type="project" value="UniProtKB-KW"/>
</dbReference>
<dbReference type="GO" id="GO:0006508">
    <property type="term" value="P:proteolysis"/>
    <property type="evidence" value="ECO:0007669"/>
    <property type="project" value="InterPro"/>
</dbReference>
<dbReference type="CDD" id="cd00190">
    <property type="entry name" value="Tryp_SPc"/>
    <property type="match status" value="1"/>
</dbReference>
<dbReference type="FunFam" id="2.40.10.10:FF:000158">
    <property type="entry name" value="Thrombin-like enzyme saxthrombin"/>
    <property type="match status" value="1"/>
</dbReference>
<dbReference type="FunFam" id="2.40.10.10:FF:000153">
    <property type="entry name" value="Venom plasminogen activator TSV-PA"/>
    <property type="match status" value="1"/>
</dbReference>
<dbReference type="Gene3D" id="2.40.10.10">
    <property type="entry name" value="Trypsin-like serine proteases"/>
    <property type="match status" value="2"/>
</dbReference>
<dbReference type="InterPro" id="IPR009003">
    <property type="entry name" value="Peptidase_S1_PA"/>
</dbReference>
<dbReference type="InterPro" id="IPR043504">
    <property type="entry name" value="Peptidase_S1_PA_chymotrypsin"/>
</dbReference>
<dbReference type="InterPro" id="IPR001314">
    <property type="entry name" value="Peptidase_S1A"/>
</dbReference>
<dbReference type="InterPro" id="IPR001254">
    <property type="entry name" value="Trypsin_dom"/>
</dbReference>
<dbReference type="PANTHER" id="PTHR24271:SF47">
    <property type="entry name" value="KALLIKREIN-1"/>
    <property type="match status" value="1"/>
</dbReference>
<dbReference type="PANTHER" id="PTHR24271">
    <property type="entry name" value="KALLIKREIN-RELATED"/>
    <property type="match status" value="1"/>
</dbReference>
<dbReference type="Pfam" id="PF00089">
    <property type="entry name" value="Trypsin"/>
    <property type="match status" value="1"/>
</dbReference>
<dbReference type="PRINTS" id="PR00722">
    <property type="entry name" value="CHYMOTRYPSIN"/>
</dbReference>
<dbReference type="SMART" id="SM00020">
    <property type="entry name" value="Tryp_SPc"/>
    <property type="match status" value="1"/>
</dbReference>
<dbReference type="SUPFAM" id="SSF50494">
    <property type="entry name" value="Trypsin-like serine proteases"/>
    <property type="match status" value="1"/>
</dbReference>
<dbReference type="PROSITE" id="PS50240">
    <property type="entry name" value="TRYPSIN_DOM"/>
    <property type="match status" value="1"/>
</dbReference>
<evidence type="ECO:0000255" key="1"/>
<evidence type="ECO:0000255" key="2">
    <source>
        <dbReference type="PROSITE-ProRule" id="PRU00274"/>
    </source>
</evidence>
<evidence type="ECO:0000269" key="3">
    <source>
    </source>
</evidence>
<evidence type="ECO:0000303" key="4">
    <source>
    </source>
</evidence>
<evidence type="ECO:0000303" key="5">
    <source>
    </source>
</evidence>
<evidence type="ECO:0000305" key="6"/>
<evidence type="ECO:0000305" key="7">
    <source>
    </source>
</evidence>
<evidence type="ECO:0000305" key="8">
    <source>
    </source>
</evidence>
<evidence type="ECO:0000312" key="9">
    <source>
        <dbReference type="EMBL" id="AMB36342.1"/>
    </source>
</evidence>
<reference key="1">
    <citation type="journal article" date="2016" name="J. Proteomics">
        <title>Venomics of Vipera berus berus to explain differences in pathology elicited by Vipera ammodytes ammodytes envenomation: therapeutic implications.</title>
        <authorList>
            <person name="Latinovic Z."/>
            <person name="Leonardi A."/>
            <person name="Sribar J."/>
            <person name="Sajevic T."/>
            <person name="Zuzek M.C."/>
            <person name="Frangez R."/>
            <person name="Halassy B."/>
            <person name="Trampus-Bakija A."/>
            <person name="Pungercar J."/>
            <person name="Krizaj I."/>
        </authorList>
    </citation>
    <scope>NUCLEOTIDE SEQUENCE [MRNA]</scope>
    <source>
        <tissue>Venom gland</tissue>
    </source>
</reference>
<reference key="2">
    <citation type="journal article" date="2018" name="Thromb. Haemost.">
        <title>The first intrinsic tenase complex inhibitor with serine protease structure offers a new perspective in anticoagulant therapy.</title>
        <authorList>
            <person name="Latinovic Z."/>
            <person name="Leonardi A."/>
            <person name="Kovacic L."/>
            <person name="Koh C.Y."/>
            <person name="Sribar J."/>
            <person name="Bakija A.T."/>
            <person name="Venkateswarlu D."/>
            <person name="Kini R.M."/>
            <person name="Krizaj I."/>
        </authorList>
    </citation>
    <scope>PROTEIN SEQUENCE OF 25-29</scope>
    <scope>FUNCTION</scope>
    <scope>IDENTIFICATION BY MASS SPECTROMETRY</scope>
    <scope>SUBCELLULAR LOCATION</scope>
    <scope>3D-STRUCTURE MODELING IN COMPLEX WITH FVIIIA</scope>
    <scope>GLYCOSYLATION</scope>
    <source>
        <tissue>Venom</tissue>
    </source>
</reference>
<proteinExistence type="evidence at protein level"/>
<organism>
    <name type="scientific">Vipera ammodytes ammodytes</name>
    <name type="common">Western sand viper</name>
    <dbReference type="NCBI Taxonomy" id="8705"/>
    <lineage>
        <taxon>Eukaryota</taxon>
        <taxon>Metazoa</taxon>
        <taxon>Chordata</taxon>
        <taxon>Craniata</taxon>
        <taxon>Vertebrata</taxon>
        <taxon>Euteleostomi</taxon>
        <taxon>Lepidosauria</taxon>
        <taxon>Squamata</taxon>
        <taxon>Bifurcata</taxon>
        <taxon>Unidentata</taxon>
        <taxon>Episquamata</taxon>
        <taxon>Toxicofera</taxon>
        <taxon>Serpentes</taxon>
        <taxon>Colubroidea</taxon>
        <taxon>Viperidae</taxon>
        <taxon>Viperinae</taxon>
        <taxon>Vipera</taxon>
    </lineage>
</organism>
<name>VSPH1_VIPAA</name>
<comment type="function">
    <text evidence="3">This is the first member of the serine protease family that has strong anticoagulant activity and lacks enzymatic activity. It inhibits activities of three blood coagulation complexes: (1) prothrombinase complex (composed of blood coagulation factors Va and Xa (F5 and F10)) (IC(50)=164.1 nM), (2) intrinsic tenase complex (composed of factors VIIIa and IXa (F8 and F9)), and (3) extrinsic tenase complex (composed of tissue factor and factor VIIa (F7)). The toxin also has been observed to bind prothrombin, factor FVa, non-activated and activated forms of factors FVII (F7) (FVII and FVIIa), factor FVIIIa (F8), factors FIX and FIXa (F9) and factors FX and FXa (F10). The toxin inhibits the activity of the intrinsic tenase complex mainly by competing with FIXa (F9) for binding to FVIIIa (F8).</text>
</comment>
<comment type="subcellular location">
    <subcellularLocation>
        <location evidence="3">Secreted</location>
    </subcellularLocation>
</comment>
<comment type="tissue specificity">
    <text evidence="7">Expressed by the venom gland.</text>
</comment>
<comment type="PTM">
    <text evidence="3">N-glycosylated. The toxin exists in multiple glycoforms.</text>
</comment>
<comment type="pharmaceutical">
    <text evidence="8">This first serine protease family member whose strong anticoagulant activity is not proteolytic activity-dependent represents an original molecular platform to develop innovative anticoagulant substances by targeting FVIIIa.</text>
</comment>
<comment type="miscellaneous">
    <text evidence="3">Negative results: does not hydrolyze fibrinogen, prothrombin, FIX, FX and protein C (PubMed:30235482). It does not induce platelet aggregation or agglutination (PubMed:30235482). It does not bind to platelet phospholipids (PubMed:30235482). It does not bind to factor FXI and FXIa, FXII and FXIIa, kallikrein and thrombin (PubMed:30235482).</text>
</comment>
<comment type="similarity">
    <text evidence="6">Belongs to the peptidase S1 family. Snake venom subfamily.</text>
</comment>
<comment type="caution">
    <text evidence="8">Lacks the canonical catalytic triad. Two of the three residues necessary for catalytic activity are mutated: Asp-112 is present, while the other two are Asn-205 (instead of Ser) and Arg-67 (instead of His). As a result, the protein is not proteolytically active.</text>
</comment>
<keyword id="KW-1203">Blood coagulation cascade inhibiting toxin</keyword>
<keyword id="KW-0903">Direct protein sequencing</keyword>
<keyword id="KW-1015">Disulfide bond</keyword>
<keyword id="KW-0325">Glycoprotein</keyword>
<keyword id="KW-1199">Hemostasis impairing toxin</keyword>
<keyword id="KW-0582">Pharmaceutical</keyword>
<keyword id="KW-0964">Secreted</keyword>
<keyword id="KW-0721">Serine protease homolog</keyword>
<keyword id="KW-0732">Signal</keyword>
<keyword id="KW-0800">Toxin</keyword>
<accession>A0A1I9KNP0</accession>